<sequence length="571" mass="62610">MDRAVSRVALENEEREAKNTWRFVFRIAILLLIVITLAISAAALVYSMEASTPGDLVGIPTVISRAEEKITSALSSNQDVVDRIYKQVALESPLALLNTESVIMNAITSLSYQINGAANNSGCGAPVHDPDYIGGIGKELIVDDASDVTSFYPSAFQEHLNFIPAPTTGSGCTRIPSFDISATHYCYTHNVILSGCRDHSHSHQYLALGVLRTSATGRVFFSTLRSINLDDNQNRKSCSVSATPLGCDMLCSKITETEEEDYSSVTPTSMVHGRLGFDGQYHEKDLDVITLFKDWVANYPGVGGGSFIDNRVWFPVYGGLKPNSPSDTVQEGRYVIYKRYNDTCPDEQDYQIRMAKSSYKPGRFGGKRVQQAILSIKVSTSLGEDPVLTIPPNTVTLMGAEGRVLTVGTSHFLYQRGSSYFSPALLYPMTVNNKTATLHSPYTFNAFTRPGSVPCQASARCPNSCVTGVYTDPYPLIFHRNHTLRGVFGTMLDDGQARLNPVSAVFDNISRSRITRVSSSRTKAAYTTSTCFKVVKTNKTYVLSIAEISNTLFGEFRIVPLLVEILKNDGV</sequence>
<reference key="1">
    <citation type="journal article" date="1989" name="Virology">
        <title>Newcastle disease virus evolution. I. Multiple lineages defined by sequence variability of the hemagglutinin-neuraminidase gene.</title>
        <authorList>
            <person name="Sakaguchi T."/>
            <person name="Toyoda T."/>
            <person name="Gotoh B."/>
            <person name="Inocencio N.M."/>
            <person name="Kuma K."/>
            <person name="Miyata T."/>
            <person name="Nagai Y."/>
        </authorList>
    </citation>
    <scope>NUCLEOTIDE SEQUENCE [GENOMIC RNA]</scope>
</reference>
<dbReference type="EC" id="3.2.1.18" evidence="3"/>
<dbReference type="EMBL" id="M24714">
    <property type="protein sequence ID" value="AAA46664.1"/>
    <property type="molecule type" value="Genomic_RNA"/>
</dbReference>
<dbReference type="PIR" id="A36829">
    <property type="entry name" value="A36829"/>
</dbReference>
<dbReference type="SMR" id="P35741"/>
<dbReference type="CAZy" id="GH83">
    <property type="family name" value="Glycoside Hydrolase Family 83"/>
</dbReference>
<dbReference type="GlyCosmos" id="P35741">
    <property type="glycosylation" value="6 sites, No reported glycans"/>
</dbReference>
<dbReference type="GO" id="GO:0020002">
    <property type="term" value="C:host cell plasma membrane"/>
    <property type="evidence" value="ECO:0007669"/>
    <property type="project" value="UniProtKB-SubCell"/>
</dbReference>
<dbReference type="GO" id="GO:0016020">
    <property type="term" value="C:membrane"/>
    <property type="evidence" value="ECO:0007669"/>
    <property type="project" value="UniProtKB-KW"/>
</dbReference>
<dbReference type="GO" id="GO:0019031">
    <property type="term" value="C:viral envelope"/>
    <property type="evidence" value="ECO:0007669"/>
    <property type="project" value="UniProtKB-KW"/>
</dbReference>
<dbReference type="GO" id="GO:0055036">
    <property type="term" value="C:virion membrane"/>
    <property type="evidence" value="ECO:0007669"/>
    <property type="project" value="UniProtKB-SubCell"/>
</dbReference>
<dbReference type="GO" id="GO:0004308">
    <property type="term" value="F:exo-alpha-sialidase activity"/>
    <property type="evidence" value="ECO:0007669"/>
    <property type="project" value="UniProtKB-EC"/>
</dbReference>
<dbReference type="GO" id="GO:0046789">
    <property type="term" value="F:host cell surface receptor binding"/>
    <property type="evidence" value="ECO:0007669"/>
    <property type="project" value="InterPro"/>
</dbReference>
<dbReference type="GO" id="GO:0046718">
    <property type="term" value="P:symbiont entry into host cell"/>
    <property type="evidence" value="ECO:0007669"/>
    <property type="project" value="UniProtKB-KW"/>
</dbReference>
<dbReference type="GO" id="GO:0019062">
    <property type="term" value="P:virion attachment to host cell"/>
    <property type="evidence" value="ECO:0007669"/>
    <property type="project" value="UniProtKB-KW"/>
</dbReference>
<dbReference type="CDD" id="cd15469">
    <property type="entry name" value="HN"/>
    <property type="match status" value="1"/>
</dbReference>
<dbReference type="FunFam" id="2.120.10.10:FF:000004">
    <property type="entry name" value="Hemagglutinin-neuraminidase"/>
    <property type="match status" value="1"/>
</dbReference>
<dbReference type="Gene3D" id="2.120.10.10">
    <property type="match status" value="1"/>
</dbReference>
<dbReference type="InterPro" id="IPR016285">
    <property type="entry name" value="Hemagglutn-neuramid"/>
</dbReference>
<dbReference type="InterPro" id="IPR000665">
    <property type="entry name" value="Hemagglutn/HN"/>
</dbReference>
<dbReference type="InterPro" id="IPR036278">
    <property type="entry name" value="Sialidase_sf"/>
</dbReference>
<dbReference type="Pfam" id="PF00423">
    <property type="entry name" value="HN"/>
    <property type="match status" value="1"/>
</dbReference>
<dbReference type="PIRSF" id="PIRSF001072">
    <property type="entry name" value="Hemagglut-neuramid_paramyxoV"/>
    <property type="match status" value="1"/>
</dbReference>
<dbReference type="SUPFAM" id="SSF50939">
    <property type="entry name" value="Sialidases"/>
    <property type="match status" value="1"/>
</dbReference>
<gene>
    <name type="primary">HN</name>
</gene>
<evidence type="ECO:0000250" key="1">
    <source>
        <dbReference type="UniProtKB" id="P04853"/>
    </source>
</evidence>
<evidence type="ECO:0000250" key="2">
    <source>
        <dbReference type="UniProtKB" id="Q91UL0"/>
    </source>
</evidence>
<evidence type="ECO:0000250" key="3">
    <source>
        <dbReference type="UniProtKB" id="Q9WAF5"/>
    </source>
</evidence>
<evidence type="ECO:0000255" key="4"/>
<evidence type="ECO:0000305" key="5"/>
<name>HN_NDVH3</name>
<feature type="chain" id="PRO_0000142610" description="Hemagglutinin-neuraminidase">
    <location>
        <begin position="1"/>
        <end position="571"/>
    </location>
</feature>
<feature type="topological domain" description="Intravirion" evidence="4">
    <location>
        <begin position="1"/>
        <end position="26"/>
    </location>
</feature>
<feature type="transmembrane region" description="Helical" evidence="4">
    <location>
        <begin position="27"/>
        <end position="47"/>
    </location>
</feature>
<feature type="topological domain" description="Virion surface" evidence="4">
    <location>
        <begin position="48"/>
        <end position="571"/>
    </location>
</feature>
<feature type="region of interest" description="Important for interaction with fusion/F protein" evidence="2">
    <location>
        <begin position="124"/>
        <end position="152"/>
    </location>
</feature>
<feature type="region of interest" description="Involved in neuraminidase activity" evidence="2">
    <location>
        <begin position="234"/>
        <end position="239"/>
    </location>
</feature>
<feature type="glycosylation site" description="N-linked (GlcNAc...) asparagine; by host" evidence="4">
    <location>
        <position position="119"/>
    </location>
</feature>
<feature type="glycosylation site" description="N-linked (GlcNAc...) asparagine; by host" evidence="2">
    <location>
        <position position="341"/>
    </location>
</feature>
<feature type="glycosylation site" description="N-linked (GlcNAc...) asparagine; by host" evidence="2">
    <location>
        <position position="433"/>
    </location>
</feature>
<feature type="glycosylation site" description="N-linked (GlcNAc...) asparagine; by host" evidence="2">
    <location>
        <position position="481"/>
    </location>
</feature>
<feature type="glycosylation site" description="N-linked (GlcNAc...) asparagine; by host" evidence="4">
    <location>
        <position position="508"/>
    </location>
</feature>
<feature type="glycosylation site" description="N-linked (GlcNAc...) asparagine; by host" evidence="4">
    <location>
        <position position="538"/>
    </location>
</feature>
<feature type="disulfide bond" evidence="3">
    <location>
        <begin position="172"/>
        <end position="196"/>
    </location>
</feature>
<feature type="disulfide bond" evidence="3">
    <location>
        <begin position="186"/>
        <end position="247"/>
    </location>
</feature>
<feature type="disulfide bond" evidence="3">
    <location>
        <begin position="238"/>
        <end position="251"/>
    </location>
</feature>
<feature type="disulfide bond" evidence="3">
    <location>
        <begin position="344"/>
        <end position="461"/>
    </location>
</feature>
<feature type="disulfide bond" evidence="3">
    <location>
        <begin position="455"/>
        <end position="465"/>
    </location>
</feature>
<proteinExistence type="inferred from homology"/>
<accession>P35741</accession>
<protein>
    <recommendedName>
        <fullName>Hemagglutinin-neuraminidase</fullName>
        <ecNumber evidence="3">3.2.1.18</ecNumber>
    </recommendedName>
</protein>
<comment type="function">
    <text evidence="2">Mediates the viral entry into the host cell together with fusion/F protein. Attaches the virus to sialic acid-containing cell receptors and thereby initiates infection. Binding of HN protein to the receptor induces a conformational change that allows the F protein to trigger virion/cell membranes fusion.</text>
</comment>
<comment type="function">
    <text evidence="2">Neuraminidase activity ensures the efficient spread of the virus by dissociating the mature virions from the neuraminic acid containing glycoproteins.</text>
</comment>
<comment type="catalytic activity">
    <reaction evidence="2">
        <text>Hydrolysis of alpha-(2-&gt;3)-, alpha-(2-&gt;6)-, alpha-(2-&gt;8)- glycosidic linkages of terminal sialic acid residues in oligosaccharides, glycoproteins, glycolipids, colominic acid and synthetic substrates.</text>
        <dbReference type="EC" id="3.2.1.18"/>
    </reaction>
</comment>
<comment type="subunit">
    <text evidence="1 2 3">Homotetramer; composed of disulfide-linked homodimers (By similarity). Interacts with F protein trimer (By similarity). Interacts with host CG-1B; this interaction inhibits viral adsorption and replication rather than internalization (By similarity).</text>
</comment>
<comment type="subcellular location">
    <subcellularLocation>
        <location evidence="2">Virion membrane</location>
        <topology evidence="2">Single-pass type II membrane protein</topology>
    </subcellularLocation>
    <subcellularLocation>
        <location evidence="2">Host cell membrane</location>
        <topology evidence="2">Single-pass type II membrane protein</topology>
    </subcellularLocation>
</comment>
<comment type="domain">
    <text evidence="3">The C-terminus (head domain) is involved in binding the cellular receptor.</text>
</comment>
<comment type="similarity">
    <text evidence="5">Belongs to the paramyxoviruses hemagglutinin-neuraminidase family.</text>
</comment>
<keyword id="KW-1015">Disulfide bond</keyword>
<keyword id="KW-0325">Glycoprotein</keyword>
<keyword id="KW-0348">Hemagglutinin</keyword>
<keyword id="KW-1032">Host cell membrane</keyword>
<keyword id="KW-1043">Host membrane</keyword>
<keyword id="KW-0945">Host-virus interaction</keyword>
<keyword id="KW-0378">Hydrolase</keyword>
<keyword id="KW-0472">Membrane</keyword>
<keyword id="KW-0735">Signal-anchor</keyword>
<keyword id="KW-0812">Transmembrane</keyword>
<keyword id="KW-1133">Transmembrane helix</keyword>
<keyword id="KW-1161">Viral attachment to host cell</keyword>
<keyword id="KW-0261">Viral envelope protein</keyword>
<keyword id="KW-0946">Virion</keyword>
<keyword id="KW-1160">Virus entry into host cell</keyword>
<organismHost>
    <name type="scientific">Gallus gallus</name>
    <name type="common">Chicken</name>
    <dbReference type="NCBI Taxonomy" id="9031"/>
</organismHost>
<organism>
    <name type="scientific">Newcastle disease virus (strain Her/33)</name>
    <name type="common">NDV</name>
    <dbReference type="NCBI Taxonomy" id="11187"/>
    <lineage>
        <taxon>Viruses</taxon>
        <taxon>Riboviria</taxon>
        <taxon>Orthornavirae</taxon>
        <taxon>Negarnaviricota</taxon>
        <taxon>Haploviricotina</taxon>
        <taxon>Monjiviricetes</taxon>
        <taxon>Mononegavirales</taxon>
        <taxon>Paramyxoviridae</taxon>
        <taxon>Avulavirinae</taxon>
        <taxon>Orthoavulavirus</taxon>
        <taxon>Orthoavulavirus javaense</taxon>
        <taxon>Avian paramyxovirus 1</taxon>
    </lineage>
</organism>